<name>XPT_LACCB</name>
<gene>
    <name evidence="1" type="primary">xpt</name>
    <name type="ordered locus">LCABL_12770</name>
</gene>
<reference key="1">
    <citation type="submission" date="2008-06" db="EMBL/GenBank/DDBJ databases">
        <title>Lactobacillus casei BL23 complete genome sequence.</title>
        <authorList>
            <person name="Maze A."/>
            <person name="Boel G."/>
            <person name="Bourand A."/>
            <person name="Loux V."/>
            <person name="Gibrat J.F."/>
            <person name="Zuniga M."/>
            <person name="Hartke A."/>
            <person name="Deutscher J."/>
        </authorList>
    </citation>
    <scope>NUCLEOTIDE SEQUENCE [LARGE SCALE GENOMIC DNA]</scope>
    <source>
        <strain>BL23</strain>
    </source>
</reference>
<evidence type="ECO:0000255" key="1">
    <source>
        <dbReference type="HAMAP-Rule" id="MF_01184"/>
    </source>
</evidence>
<keyword id="KW-0963">Cytoplasm</keyword>
<keyword id="KW-0328">Glycosyltransferase</keyword>
<keyword id="KW-0660">Purine salvage</keyword>
<keyword id="KW-0808">Transferase</keyword>
<protein>
    <recommendedName>
        <fullName evidence="1">Xanthine phosphoribosyltransferase</fullName>
        <shortName evidence="1">XPRTase</shortName>
        <ecNumber evidence="1">2.4.2.22</ecNumber>
    </recommendedName>
</protein>
<proteinExistence type="inferred from homology"/>
<sequence length="192" mass="21385">MKLLEDRIKKDGQVIGTDVLKVDNFLNHQVDPDLMADLGHEFYRRFSNEPITKILTVESSGIAPAIATAMEFHKPLVFARKHKSLTLKDHLYTATVYSFTKKTSNEIAISRKFLSADDNVLIIDDFLANGQAVEGLMDIIAQAGATLSGVGIVIEKTFQKGRKLLDEKHVRVESLARINAFENGQVIFAPED</sequence>
<dbReference type="EC" id="2.4.2.22" evidence="1"/>
<dbReference type="EMBL" id="FM177140">
    <property type="protein sequence ID" value="CAQ66361.1"/>
    <property type="molecule type" value="Genomic_DNA"/>
</dbReference>
<dbReference type="SMR" id="B3WDB0"/>
<dbReference type="KEGG" id="lcb:LCABL_12770"/>
<dbReference type="HOGENOM" id="CLU_099015_0_0_9"/>
<dbReference type="UniPathway" id="UPA00602">
    <property type="reaction ID" value="UER00658"/>
</dbReference>
<dbReference type="GO" id="GO:0005737">
    <property type="term" value="C:cytoplasm"/>
    <property type="evidence" value="ECO:0007669"/>
    <property type="project" value="UniProtKB-SubCell"/>
</dbReference>
<dbReference type="GO" id="GO:0000310">
    <property type="term" value="F:xanthine phosphoribosyltransferase activity"/>
    <property type="evidence" value="ECO:0007669"/>
    <property type="project" value="UniProtKB-UniRule"/>
</dbReference>
<dbReference type="GO" id="GO:0006166">
    <property type="term" value="P:purine ribonucleoside salvage"/>
    <property type="evidence" value="ECO:0007669"/>
    <property type="project" value="UniProtKB-KW"/>
</dbReference>
<dbReference type="GO" id="GO:0046110">
    <property type="term" value="P:xanthine metabolic process"/>
    <property type="evidence" value="ECO:0007669"/>
    <property type="project" value="InterPro"/>
</dbReference>
<dbReference type="GO" id="GO:0032265">
    <property type="term" value="P:XMP salvage"/>
    <property type="evidence" value="ECO:0007669"/>
    <property type="project" value="UniProtKB-UniRule"/>
</dbReference>
<dbReference type="CDD" id="cd06223">
    <property type="entry name" value="PRTases_typeI"/>
    <property type="match status" value="1"/>
</dbReference>
<dbReference type="Gene3D" id="3.40.50.2020">
    <property type="match status" value="1"/>
</dbReference>
<dbReference type="HAMAP" id="MF_01184">
    <property type="entry name" value="XPRTase"/>
    <property type="match status" value="1"/>
</dbReference>
<dbReference type="InterPro" id="IPR000836">
    <property type="entry name" value="PRibTrfase_dom"/>
</dbReference>
<dbReference type="InterPro" id="IPR029057">
    <property type="entry name" value="PRTase-like"/>
</dbReference>
<dbReference type="InterPro" id="IPR050118">
    <property type="entry name" value="Pur/Pyrimidine_PRTase"/>
</dbReference>
<dbReference type="InterPro" id="IPR010079">
    <property type="entry name" value="Xanthine_PRibTrfase"/>
</dbReference>
<dbReference type="NCBIfam" id="NF006671">
    <property type="entry name" value="PRK09219.1"/>
    <property type="match status" value="1"/>
</dbReference>
<dbReference type="NCBIfam" id="TIGR01744">
    <property type="entry name" value="XPRTase"/>
    <property type="match status" value="1"/>
</dbReference>
<dbReference type="PANTHER" id="PTHR43864">
    <property type="entry name" value="HYPOXANTHINE/GUANINE PHOSPHORIBOSYLTRANSFERASE"/>
    <property type="match status" value="1"/>
</dbReference>
<dbReference type="PANTHER" id="PTHR43864:SF1">
    <property type="entry name" value="XANTHINE PHOSPHORIBOSYLTRANSFERASE"/>
    <property type="match status" value="1"/>
</dbReference>
<dbReference type="Pfam" id="PF00156">
    <property type="entry name" value="Pribosyltran"/>
    <property type="match status" value="1"/>
</dbReference>
<dbReference type="SUPFAM" id="SSF53271">
    <property type="entry name" value="PRTase-like"/>
    <property type="match status" value="1"/>
</dbReference>
<feature type="chain" id="PRO_1000138238" description="Xanthine phosphoribosyltransferase">
    <location>
        <begin position="1"/>
        <end position="192"/>
    </location>
</feature>
<feature type="binding site" evidence="1">
    <location>
        <position position="20"/>
    </location>
    <ligand>
        <name>xanthine</name>
        <dbReference type="ChEBI" id="CHEBI:17712"/>
    </ligand>
</feature>
<feature type="binding site" evidence="1">
    <location>
        <position position="27"/>
    </location>
    <ligand>
        <name>xanthine</name>
        <dbReference type="ChEBI" id="CHEBI:17712"/>
    </ligand>
</feature>
<feature type="binding site" evidence="1">
    <location>
        <begin position="128"/>
        <end position="132"/>
    </location>
    <ligand>
        <name>5-phospho-alpha-D-ribose 1-diphosphate</name>
        <dbReference type="ChEBI" id="CHEBI:58017"/>
    </ligand>
</feature>
<feature type="binding site" evidence="1">
    <location>
        <position position="156"/>
    </location>
    <ligand>
        <name>xanthine</name>
        <dbReference type="ChEBI" id="CHEBI:17712"/>
    </ligand>
</feature>
<organism>
    <name type="scientific">Lacticaseibacillus casei (strain BL23)</name>
    <name type="common">Lactobacillus casei</name>
    <dbReference type="NCBI Taxonomy" id="543734"/>
    <lineage>
        <taxon>Bacteria</taxon>
        <taxon>Bacillati</taxon>
        <taxon>Bacillota</taxon>
        <taxon>Bacilli</taxon>
        <taxon>Lactobacillales</taxon>
        <taxon>Lactobacillaceae</taxon>
        <taxon>Lacticaseibacillus</taxon>
    </lineage>
</organism>
<comment type="function">
    <text evidence="1">Converts the preformed base xanthine, a product of nucleic acid breakdown, to xanthosine 5'-monophosphate (XMP), so it can be reused for RNA or DNA synthesis.</text>
</comment>
<comment type="catalytic activity">
    <reaction evidence="1">
        <text>XMP + diphosphate = xanthine + 5-phospho-alpha-D-ribose 1-diphosphate</text>
        <dbReference type="Rhea" id="RHEA:10800"/>
        <dbReference type="ChEBI" id="CHEBI:17712"/>
        <dbReference type="ChEBI" id="CHEBI:33019"/>
        <dbReference type="ChEBI" id="CHEBI:57464"/>
        <dbReference type="ChEBI" id="CHEBI:58017"/>
        <dbReference type="EC" id="2.4.2.22"/>
    </reaction>
</comment>
<comment type="pathway">
    <text evidence="1">Purine metabolism; XMP biosynthesis via salvage pathway; XMP from xanthine: step 1/1.</text>
</comment>
<comment type="subunit">
    <text evidence="1">Homodimer.</text>
</comment>
<comment type="subcellular location">
    <subcellularLocation>
        <location evidence="1">Cytoplasm</location>
    </subcellularLocation>
</comment>
<comment type="similarity">
    <text evidence="1">Belongs to the purine/pyrimidine phosphoribosyltransferase family. Xpt subfamily.</text>
</comment>
<accession>B3WDB0</accession>